<gene>
    <name type="primary">SDHA</name>
</gene>
<dbReference type="EC" id="1.3.5.1" evidence="2"/>
<dbReference type="EC" id="1.1.5.-" evidence="1"/>
<dbReference type="EMBL" id="CR860684">
    <property type="protein sequence ID" value="CAH92800.1"/>
    <property type="molecule type" value="mRNA"/>
</dbReference>
<dbReference type="RefSeq" id="NP_001126633.1">
    <property type="nucleotide sequence ID" value="NM_001133161.1"/>
</dbReference>
<dbReference type="SMR" id="Q5R616"/>
<dbReference type="FunCoup" id="Q5R616">
    <property type="interactions" value="1502"/>
</dbReference>
<dbReference type="STRING" id="9601.ENSPPYP00000017089"/>
<dbReference type="GeneID" id="100173631"/>
<dbReference type="KEGG" id="pon:100173631"/>
<dbReference type="CTD" id="6389"/>
<dbReference type="eggNOG" id="KOG2403">
    <property type="taxonomic scope" value="Eukaryota"/>
</dbReference>
<dbReference type="InParanoid" id="Q5R616"/>
<dbReference type="OrthoDB" id="71672at2759"/>
<dbReference type="UniPathway" id="UPA00223">
    <property type="reaction ID" value="UER01006"/>
</dbReference>
<dbReference type="Proteomes" id="UP000001595">
    <property type="component" value="Unplaced"/>
</dbReference>
<dbReference type="GO" id="GO:0005743">
    <property type="term" value="C:mitochondrial inner membrane"/>
    <property type="evidence" value="ECO:0000250"/>
    <property type="project" value="UniProtKB"/>
</dbReference>
<dbReference type="GO" id="GO:0005739">
    <property type="term" value="C:mitochondrion"/>
    <property type="evidence" value="ECO:0000250"/>
    <property type="project" value="UniProtKB"/>
</dbReference>
<dbReference type="GO" id="GO:0045273">
    <property type="term" value="C:respiratory chain complex II (succinate dehydrogenase)"/>
    <property type="evidence" value="ECO:0000250"/>
    <property type="project" value="UniProtKB"/>
</dbReference>
<dbReference type="GO" id="GO:0009055">
    <property type="term" value="F:electron transfer activity"/>
    <property type="evidence" value="ECO:0007669"/>
    <property type="project" value="TreeGrafter"/>
</dbReference>
<dbReference type="GO" id="GO:0050660">
    <property type="term" value="F:flavin adenine dinucleotide binding"/>
    <property type="evidence" value="ECO:0007669"/>
    <property type="project" value="InterPro"/>
</dbReference>
<dbReference type="GO" id="GO:0008177">
    <property type="term" value="F:succinate dehydrogenase (quinone) activity"/>
    <property type="evidence" value="ECO:0000250"/>
    <property type="project" value="UniProtKB"/>
</dbReference>
<dbReference type="GO" id="GO:0006121">
    <property type="term" value="P:mitochondrial electron transport, succinate to ubiquinone"/>
    <property type="evidence" value="ECO:0007669"/>
    <property type="project" value="TreeGrafter"/>
</dbReference>
<dbReference type="GO" id="GO:0022904">
    <property type="term" value="P:respiratory electron transport chain"/>
    <property type="evidence" value="ECO:0000250"/>
    <property type="project" value="UniProtKB"/>
</dbReference>
<dbReference type="GO" id="GO:0006105">
    <property type="term" value="P:succinate metabolic process"/>
    <property type="evidence" value="ECO:0000250"/>
    <property type="project" value="UniProtKB"/>
</dbReference>
<dbReference type="GO" id="GO:0006099">
    <property type="term" value="P:tricarboxylic acid cycle"/>
    <property type="evidence" value="ECO:0007669"/>
    <property type="project" value="UniProtKB-UniPathway"/>
</dbReference>
<dbReference type="FunFam" id="3.90.700.10:FF:000001">
    <property type="entry name" value="Mitochondrial succinate dehydrogenase flavoprotein subunit"/>
    <property type="match status" value="1"/>
</dbReference>
<dbReference type="FunFam" id="4.10.80.40:FF:000004">
    <property type="entry name" value="Succinate dehydrogenase [ubiquinone] flavoprotein subunit, mitochondrial"/>
    <property type="match status" value="1"/>
</dbReference>
<dbReference type="FunFam" id="3.50.50.60:FF:000482">
    <property type="entry name" value="Succinate dehydrogenase complex, subunit A, flavoprotein (Fp)"/>
    <property type="match status" value="1"/>
</dbReference>
<dbReference type="FunFam" id="3.50.50.60:FF:001062">
    <property type="entry name" value="Succinate dehydrogenase complex, subunit A, flavoprotein (Fp)"/>
    <property type="match status" value="1"/>
</dbReference>
<dbReference type="FunFam" id="1.20.58.100:FF:000001">
    <property type="entry name" value="Succinate dehydrogenase flavoprotein subunit (SdhA)"/>
    <property type="match status" value="1"/>
</dbReference>
<dbReference type="Gene3D" id="3.50.50.60">
    <property type="entry name" value="FAD/NAD(P)-binding domain"/>
    <property type="match status" value="1"/>
</dbReference>
<dbReference type="Gene3D" id="1.20.58.100">
    <property type="entry name" value="Fumarate reductase/succinate dehydrogenase flavoprotein-like, C-terminal domain"/>
    <property type="match status" value="1"/>
</dbReference>
<dbReference type="Gene3D" id="4.10.80.40">
    <property type="entry name" value="succinate dehydrogenase protein domain"/>
    <property type="match status" value="1"/>
</dbReference>
<dbReference type="Gene3D" id="3.90.700.10">
    <property type="entry name" value="Succinate dehydrogenase/fumarate reductase flavoprotein, catalytic domain"/>
    <property type="match status" value="1"/>
</dbReference>
<dbReference type="InterPro" id="IPR003953">
    <property type="entry name" value="FAD-dep_OxRdtase_2_FAD-bd"/>
</dbReference>
<dbReference type="InterPro" id="IPR036188">
    <property type="entry name" value="FAD/NAD-bd_sf"/>
</dbReference>
<dbReference type="InterPro" id="IPR003952">
    <property type="entry name" value="FRD_SDH_FAD_BS"/>
</dbReference>
<dbReference type="InterPro" id="IPR037099">
    <property type="entry name" value="Fum_R/Succ_DH_flav-like_C_sf"/>
</dbReference>
<dbReference type="InterPro" id="IPR015939">
    <property type="entry name" value="Fum_Rdtase/Succ_DH_flav-like_C"/>
</dbReference>
<dbReference type="InterPro" id="IPR030664">
    <property type="entry name" value="SdhA/FrdA/AprA"/>
</dbReference>
<dbReference type="InterPro" id="IPR027477">
    <property type="entry name" value="Succ_DH/fumarate_Rdtase_cat_sf"/>
</dbReference>
<dbReference type="InterPro" id="IPR011281">
    <property type="entry name" value="Succ_DH_flav_su_fwd"/>
</dbReference>
<dbReference type="InterPro" id="IPR014006">
    <property type="entry name" value="Succ_Dhase_FrdA_Gneg"/>
</dbReference>
<dbReference type="NCBIfam" id="TIGR01816">
    <property type="entry name" value="sdhA_forward"/>
    <property type="match status" value="1"/>
</dbReference>
<dbReference type="NCBIfam" id="TIGR01812">
    <property type="entry name" value="sdhA_frdA_Gneg"/>
    <property type="match status" value="1"/>
</dbReference>
<dbReference type="PANTHER" id="PTHR11632">
    <property type="entry name" value="SUCCINATE DEHYDROGENASE 2 FLAVOPROTEIN SUBUNIT"/>
    <property type="match status" value="1"/>
</dbReference>
<dbReference type="PANTHER" id="PTHR11632:SF51">
    <property type="entry name" value="SUCCINATE DEHYDROGENASE [UBIQUINONE] FLAVOPROTEIN SUBUNIT, MITOCHONDRIAL"/>
    <property type="match status" value="1"/>
</dbReference>
<dbReference type="Pfam" id="PF00890">
    <property type="entry name" value="FAD_binding_2"/>
    <property type="match status" value="1"/>
</dbReference>
<dbReference type="Pfam" id="PF02910">
    <property type="entry name" value="Succ_DH_flav_C"/>
    <property type="match status" value="1"/>
</dbReference>
<dbReference type="PIRSF" id="PIRSF000171">
    <property type="entry name" value="SDHA_APRA_LASPO"/>
    <property type="match status" value="1"/>
</dbReference>
<dbReference type="SUPFAM" id="SSF51905">
    <property type="entry name" value="FAD/NAD(P)-binding domain"/>
    <property type="match status" value="1"/>
</dbReference>
<dbReference type="SUPFAM" id="SSF46977">
    <property type="entry name" value="Succinate dehydrogenase/fumarate reductase flavoprotein C-terminal domain"/>
    <property type="match status" value="1"/>
</dbReference>
<dbReference type="SUPFAM" id="SSF56425">
    <property type="entry name" value="Succinate dehydrogenase/fumarate reductase flavoprotein, catalytic domain"/>
    <property type="match status" value="1"/>
</dbReference>
<dbReference type="PROSITE" id="PS00504">
    <property type="entry name" value="FRD_SDH_FAD_BINDING"/>
    <property type="match status" value="1"/>
</dbReference>
<protein>
    <recommendedName>
        <fullName>Succinate dehydrogenase [ubiquinone] flavoprotein subunit, mitochondrial</fullName>
        <ecNumber evidence="2">1.3.5.1</ecNumber>
    </recommendedName>
    <alternativeName>
        <fullName>Flavoprotein subunit of complex II</fullName>
        <shortName>Fp</shortName>
    </alternativeName>
    <alternativeName>
        <fullName>Malate dehydrogenase [quinone] flavoprotein subunit</fullName>
        <ecNumber evidence="1">1.1.5.-</ecNumber>
    </alternativeName>
</protein>
<name>SDHA_PONAB</name>
<sequence length="664" mass="72692">MSGVRGLSRLLSARRLALAKAWPTVLQTGARGFHFTVDGNKRASAKVSDSISAQYPVVDHEFDAVVVGAGGAGLRAAFGLSEAGFNTACVTKLFPTRSHTVAAQGGINAALGNMEEDNWRWHFYDTVKGSDWLGDQDAIHYMTEQAPAAVVELENYGMPFSRTEDGKIYQRAFGGQSLKFGKGGQAHRCCCVADRTGHSLLHTLYGRSLRYDTSYFVEYFALDLLMENGECRGVIALCIEDGSIHRIRAKNTVVATGGYGRTYFSCTSAHTSTGDGTAMITRAGLPCQDLEFVQFHPTGIYGAGCLITEGCRGEGGILINSQGERFMERYAPVAKDLASRDVVSRSMTLEIREGRGCGPEKDHVYLQLHHLPPEQLATRLPGISETAMIFAGVDVTKEPIPVLPTVHYNMGGIPTNYKGQVLRHVNGQDQIVPGLYACGEAACASVHGANRLGANSLLDLVVFGRACALSIEESCRPGDKVPPIKPNAGEESVMNLDKLRFADGSIRTSELRLSMQKSMQNHAAVFRVGSVLQEGCGKISKLYGDLKHLKTFDRGMVWNTDLVETLELQNLMLCALQTIYGAEARKESRGAHAREDYKVRIDEYDYSKPIQGQQKKPFEEHWRKHTLSYVDVSTGKVTLEYRPVIDKTLNEADCATVPPAIRSY</sequence>
<proteinExistence type="evidence at transcript level"/>
<comment type="function">
    <text evidence="1 2">Flavoprotein (FP) subunit of succinate dehydrogenase (SDH) that is involved in complex II of the mitochondrial electron transport chain and is responsible for transferring electrons from succinate to ubiquinone (coenzyme Q) (By similarity). SDH also oxidizes malate to the non-canonical enol form of oxaloacetate, enol-oxaloacetate. Enol-oxaloacetate, which is a potent inhibitor of the succinate dehydrogenase activity, is further isomerized into keto-oxaloacetate (By similarity). Can act as a tumor suppressor (By similarity).</text>
</comment>
<comment type="catalytic activity">
    <reaction evidence="2">
        <text>a ubiquinone + succinate = a ubiquinol + fumarate</text>
        <dbReference type="Rhea" id="RHEA:13713"/>
        <dbReference type="Rhea" id="RHEA-COMP:9565"/>
        <dbReference type="Rhea" id="RHEA-COMP:9566"/>
        <dbReference type="ChEBI" id="CHEBI:16389"/>
        <dbReference type="ChEBI" id="CHEBI:17976"/>
        <dbReference type="ChEBI" id="CHEBI:29806"/>
        <dbReference type="ChEBI" id="CHEBI:30031"/>
        <dbReference type="EC" id="1.3.5.1"/>
    </reaction>
</comment>
<comment type="catalytic activity">
    <reaction evidence="1">
        <text>(R)-malate + a quinone = enol-oxaloacetate + a quinol</text>
        <dbReference type="Rhea" id="RHEA:79827"/>
        <dbReference type="ChEBI" id="CHEBI:15588"/>
        <dbReference type="ChEBI" id="CHEBI:17479"/>
        <dbReference type="ChEBI" id="CHEBI:24646"/>
        <dbReference type="ChEBI" id="CHEBI:132124"/>
    </reaction>
    <physiologicalReaction direction="left-to-right" evidence="1">
        <dbReference type="Rhea" id="RHEA:79828"/>
    </physiologicalReaction>
</comment>
<comment type="catalytic activity">
    <reaction evidence="1">
        <text>(S)-malate + a quinone = enol-oxaloacetate + a quinol</text>
        <dbReference type="Rhea" id="RHEA:79831"/>
        <dbReference type="ChEBI" id="CHEBI:15589"/>
        <dbReference type="ChEBI" id="CHEBI:17479"/>
        <dbReference type="ChEBI" id="CHEBI:24646"/>
        <dbReference type="ChEBI" id="CHEBI:132124"/>
    </reaction>
    <physiologicalReaction direction="left-to-right" evidence="1">
        <dbReference type="Rhea" id="RHEA:79832"/>
    </physiologicalReaction>
</comment>
<comment type="cofactor">
    <cofactor evidence="3">
        <name>FAD</name>
        <dbReference type="ChEBI" id="CHEBI:57692"/>
    </cofactor>
</comment>
<comment type="activity regulation">
    <text evidence="1">Enol-oxaloacetate inhibits the succinate dehydrogenase activity.</text>
</comment>
<comment type="pathway">
    <text evidence="2">Carbohydrate metabolism; tricarboxylic acid cycle; fumarate from succinate (eukaryal route): step 1/1.</text>
</comment>
<comment type="subunit">
    <text evidence="2 3">Component of complex II composed of four subunits: the flavoprotein (FP) SDHA, iron-sulfur protein (IP) SDHB, and a cytochrome b560 composed of SDHC and SDHD (By similarity). Interacts with SDHAF2/SDH5; interaction is required for FAD attachment (By similarity). Interacts with TRAP1 (By similarity). Interacts with LACC1 (By similarity).</text>
</comment>
<comment type="subcellular location">
    <subcellularLocation>
        <location evidence="3">Mitochondrion inner membrane</location>
        <topology evidence="3">Peripheral membrane protein</topology>
        <orientation evidence="3">Matrix side</orientation>
    </subcellularLocation>
</comment>
<comment type="PTM">
    <text evidence="4">Acetylated. Deacetylated by SIRT3.</text>
</comment>
<comment type="PTM">
    <text evidence="2">Phosphorylation at Tyr-215 is important for efficient electron transfer in complex II and the prevention of ROS generation.</text>
</comment>
<comment type="similarity">
    <text evidence="6">Belongs to the FAD-dependent oxidoreductase 2 family. FRD/SDH subfamily.</text>
</comment>
<evidence type="ECO:0000250" key="1">
    <source>
        <dbReference type="UniProtKB" id="P31039"/>
    </source>
</evidence>
<evidence type="ECO:0000250" key="2">
    <source>
        <dbReference type="UniProtKB" id="P31040"/>
    </source>
</evidence>
<evidence type="ECO:0000250" key="3">
    <source>
        <dbReference type="UniProtKB" id="Q0QF01"/>
    </source>
</evidence>
<evidence type="ECO:0000250" key="4">
    <source>
        <dbReference type="UniProtKB" id="Q8K2B3"/>
    </source>
</evidence>
<evidence type="ECO:0000250" key="5">
    <source>
        <dbReference type="UniProtKB" id="Q9YHT1"/>
    </source>
</evidence>
<evidence type="ECO:0000305" key="6"/>
<keyword id="KW-0007">Acetylation</keyword>
<keyword id="KW-0249">Electron transport</keyword>
<keyword id="KW-0274">FAD</keyword>
<keyword id="KW-0285">Flavoprotein</keyword>
<keyword id="KW-0472">Membrane</keyword>
<keyword id="KW-0496">Mitochondrion</keyword>
<keyword id="KW-0999">Mitochondrion inner membrane</keyword>
<keyword id="KW-0560">Oxidoreductase</keyword>
<keyword id="KW-0597">Phosphoprotein</keyword>
<keyword id="KW-1185">Reference proteome</keyword>
<keyword id="KW-0809">Transit peptide</keyword>
<keyword id="KW-0813">Transport</keyword>
<keyword id="KW-0816">Tricarboxylic acid cycle</keyword>
<keyword id="KW-0043">Tumor suppressor</keyword>
<reference key="1">
    <citation type="submission" date="2004-11" db="EMBL/GenBank/DDBJ databases">
        <authorList>
            <consortium name="The German cDNA consortium"/>
        </authorList>
    </citation>
    <scope>NUCLEOTIDE SEQUENCE [LARGE SCALE MRNA]</scope>
    <source>
        <tissue>Brain cortex</tissue>
    </source>
</reference>
<accession>Q5R616</accession>
<feature type="transit peptide" description="Mitochondrion" evidence="3">
    <location>
        <begin position="1"/>
        <end position="42"/>
    </location>
</feature>
<feature type="chain" id="PRO_0000272304" description="Succinate dehydrogenase [ubiquinone] flavoprotein subunit, mitochondrial">
    <location>
        <begin position="43"/>
        <end position="664"/>
    </location>
</feature>
<feature type="active site" description="Proton acceptor" evidence="5">
    <location>
        <position position="340"/>
    </location>
</feature>
<feature type="binding site" evidence="2">
    <location>
        <position position="69"/>
    </location>
    <ligand>
        <name>FAD</name>
        <dbReference type="ChEBI" id="CHEBI:57692"/>
    </ligand>
</feature>
<feature type="binding site" evidence="2">
    <location>
        <position position="72"/>
    </location>
    <ligand>
        <name>FAD</name>
        <dbReference type="ChEBI" id="CHEBI:57692"/>
    </ligand>
</feature>
<feature type="binding site" evidence="2">
    <location>
        <position position="91"/>
    </location>
    <ligand>
        <name>FAD</name>
        <dbReference type="ChEBI" id="CHEBI:57692"/>
    </ligand>
</feature>
<feature type="binding site" evidence="2">
    <location>
        <position position="92"/>
    </location>
    <ligand>
        <name>FAD</name>
        <dbReference type="ChEBI" id="CHEBI:57692"/>
    </ligand>
</feature>
<feature type="binding site" evidence="2">
    <location>
        <position position="98"/>
    </location>
    <ligand>
        <name>FAD</name>
        <dbReference type="ChEBI" id="CHEBI:57692"/>
    </ligand>
</feature>
<feature type="binding site" evidence="2">
    <location>
        <position position="100"/>
    </location>
    <ligand>
        <name>FAD</name>
        <dbReference type="ChEBI" id="CHEBI:57692"/>
    </ligand>
</feature>
<feature type="binding site" evidence="2">
    <location>
        <position position="105"/>
    </location>
    <ligand>
        <name>FAD</name>
        <dbReference type="ChEBI" id="CHEBI:57692"/>
    </ligand>
</feature>
<feature type="binding site" evidence="2">
    <location>
        <position position="221"/>
    </location>
    <ligand>
        <name>FAD</name>
        <dbReference type="ChEBI" id="CHEBI:57692"/>
    </ligand>
</feature>
<feature type="binding site" evidence="2">
    <location>
        <position position="275"/>
    </location>
    <ligand>
        <name>FAD</name>
        <dbReference type="ChEBI" id="CHEBI:57692"/>
    </ligand>
</feature>
<feature type="binding site" evidence="2">
    <location>
        <position position="296"/>
    </location>
    <ligand>
        <name>oxaloacetate</name>
        <dbReference type="ChEBI" id="CHEBI:16452"/>
    </ligand>
</feature>
<feature type="binding site" evidence="2">
    <location>
        <position position="340"/>
    </location>
    <ligand>
        <name>oxaloacetate</name>
        <dbReference type="ChEBI" id="CHEBI:16452"/>
    </ligand>
</feature>
<feature type="binding site" evidence="2">
    <location>
        <position position="407"/>
    </location>
    <ligand>
        <name>oxaloacetate</name>
        <dbReference type="ChEBI" id="CHEBI:16452"/>
    </ligand>
</feature>
<feature type="binding site" evidence="2">
    <location>
        <position position="440"/>
    </location>
    <ligand>
        <name>FAD</name>
        <dbReference type="ChEBI" id="CHEBI:57692"/>
    </ligand>
</feature>
<feature type="binding site" evidence="2">
    <location>
        <position position="451"/>
    </location>
    <ligand>
        <name>oxaloacetate</name>
        <dbReference type="ChEBI" id="CHEBI:16452"/>
    </ligand>
</feature>
<feature type="binding site" evidence="2">
    <location>
        <position position="454"/>
    </location>
    <ligand>
        <name>oxaloacetate</name>
        <dbReference type="ChEBI" id="CHEBI:16452"/>
    </ligand>
</feature>
<feature type="binding site" evidence="2">
    <location>
        <position position="456"/>
    </location>
    <ligand>
        <name>FAD</name>
        <dbReference type="ChEBI" id="CHEBI:57692"/>
    </ligand>
</feature>
<feature type="binding site" evidence="2">
    <location>
        <position position="457"/>
    </location>
    <ligand>
        <name>FAD</name>
        <dbReference type="ChEBI" id="CHEBI:57692"/>
    </ligand>
</feature>
<feature type="modified residue" description="Tele-8alpha-FAD histidine" evidence="3">
    <location>
        <position position="99"/>
    </location>
</feature>
<feature type="modified residue" description="N6-acetyllysine" evidence="4">
    <location>
        <position position="167"/>
    </location>
</feature>
<feature type="modified residue" description="N6-acetyllysine; alternate" evidence="2">
    <location>
        <position position="179"/>
    </location>
</feature>
<feature type="modified residue" description="N6-succinyllysine; alternate" evidence="4">
    <location>
        <position position="179"/>
    </location>
</feature>
<feature type="modified residue" description="N6-acetyllysine" evidence="4">
    <location>
        <position position="182"/>
    </location>
</feature>
<feature type="modified residue" description="Phosphotyrosine; by SRC" evidence="2">
    <location>
        <position position="215"/>
    </location>
</feature>
<feature type="modified residue" description="N6-acetyllysine; alternate" evidence="4">
    <location>
        <position position="250"/>
    </location>
</feature>
<feature type="modified residue" description="N6-succinyllysine; alternate" evidence="4">
    <location>
        <position position="250"/>
    </location>
</feature>
<feature type="modified residue" description="N6-acetyllysine; alternate" evidence="2">
    <location>
        <position position="335"/>
    </location>
</feature>
<feature type="modified residue" description="N6-succinyllysine; alternate" evidence="4">
    <location>
        <position position="335"/>
    </location>
</feature>
<feature type="modified residue" description="N6-acetyllysine" evidence="4">
    <location>
        <position position="480"/>
    </location>
</feature>
<feature type="modified residue" description="N6-acetyllysine; alternate" evidence="4">
    <location>
        <position position="485"/>
    </location>
</feature>
<feature type="modified residue" description="N6-succinyllysine; alternate" evidence="4">
    <location>
        <position position="485"/>
    </location>
</feature>
<feature type="modified residue" description="N6-acetyllysine; alternate" evidence="4">
    <location>
        <position position="498"/>
    </location>
</feature>
<feature type="modified residue" description="N6-succinyllysine; alternate" evidence="4">
    <location>
        <position position="498"/>
    </location>
</feature>
<feature type="modified residue" description="N6-acetyllysine" evidence="4">
    <location>
        <position position="517"/>
    </location>
</feature>
<feature type="modified residue" description="N6-acetyllysine; alternate" evidence="4">
    <location>
        <position position="538"/>
    </location>
</feature>
<feature type="modified residue" description="N6-succinyllysine; alternate" evidence="4">
    <location>
        <position position="538"/>
    </location>
</feature>
<feature type="modified residue" description="N6-acetyllysine" evidence="2">
    <location>
        <position position="541"/>
    </location>
</feature>
<feature type="modified residue" description="N6-acetyllysine; alternate" evidence="4">
    <location>
        <position position="547"/>
    </location>
</feature>
<feature type="modified residue" description="N6-succinyllysine; alternate" evidence="4">
    <location>
        <position position="547"/>
    </location>
</feature>
<feature type="modified residue" description="N6-acetyllysine" evidence="4">
    <location>
        <position position="550"/>
    </location>
</feature>
<feature type="modified residue" description="N6-acetyllysine" evidence="4">
    <location>
        <position position="598"/>
    </location>
</feature>
<feature type="modified residue" description="N6-acetyllysine" evidence="2">
    <location>
        <position position="608"/>
    </location>
</feature>
<feature type="modified residue" description="N6-succinyllysine" evidence="4">
    <location>
        <position position="615"/>
    </location>
</feature>
<feature type="modified residue" description="N6-acetyllysine" evidence="4">
    <location>
        <position position="624"/>
    </location>
</feature>
<feature type="modified residue" description="N6-acetyllysine" evidence="4">
    <location>
        <position position="636"/>
    </location>
</feature>
<feature type="modified residue" description="N6-acetyllysine" evidence="4">
    <location>
        <position position="647"/>
    </location>
</feature>
<organism>
    <name type="scientific">Pongo abelii</name>
    <name type="common">Sumatran orangutan</name>
    <name type="synonym">Pongo pygmaeus abelii</name>
    <dbReference type="NCBI Taxonomy" id="9601"/>
    <lineage>
        <taxon>Eukaryota</taxon>
        <taxon>Metazoa</taxon>
        <taxon>Chordata</taxon>
        <taxon>Craniata</taxon>
        <taxon>Vertebrata</taxon>
        <taxon>Euteleostomi</taxon>
        <taxon>Mammalia</taxon>
        <taxon>Eutheria</taxon>
        <taxon>Euarchontoglires</taxon>
        <taxon>Primates</taxon>
        <taxon>Haplorrhini</taxon>
        <taxon>Catarrhini</taxon>
        <taxon>Hominidae</taxon>
        <taxon>Pongo</taxon>
    </lineage>
</organism>